<proteinExistence type="evidence at protein level"/>
<keyword id="KW-0002">3D-structure</keyword>
<keyword id="KW-0406">Ion transport</keyword>
<keyword id="KW-0500">Molybdenum</keyword>
<keyword id="KW-0574">Periplasm</keyword>
<keyword id="KW-1185">Reference proteome</keyword>
<keyword id="KW-0732">Signal</keyword>
<keyword id="KW-0813">Transport</keyword>
<evidence type="ECO:0000255" key="1"/>
<evidence type="ECO:0000255" key="2">
    <source>
        <dbReference type="PROSITE-ProRule" id="PRU00344"/>
    </source>
</evidence>
<evidence type="ECO:0000269" key="3">
    <source>
    </source>
</evidence>
<evidence type="ECO:0000269" key="4">
    <source>
    </source>
</evidence>
<evidence type="ECO:0000269" key="5">
    <source>
    </source>
</evidence>
<evidence type="ECO:0000269" key="6">
    <source>
    </source>
</evidence>
<evidence type="ECO:0000269" key="7">
    <source>
    </source>
</evidence>
<evidence type="ECO:0000303" key="8">
    <source>
    </source>
</evidence>
<evidence type="ECO:0000305" key="9"/>
<evidence type="ECO:0007744" key="10">
    <source>
        <dbReference type="PDB" id="3PSA"/>
    </source>
</evidence>
<evidence type="ECO:0007744" key="11">
    <source>
        <dbReference type="PDB" id="3PSH"/>
    </source>
</evidence>
<evidence type="ECO:0007829" key="12">
    <source>
        <dbReference type="PDB" id="3PSH"/>
    </source>
</evidence>
<dbReference type="EMBL" id="L42023">
    <property type="protein sequence ID" value="AAC23120.1"/>
    <property type="molecule type" value="Genomic_DNA"/>
</dbReference>
<dbReference type="PIR" id="I64030">
    <property type="entry name" value="I64030"/>
</dbReference>
<dbReference type="RefSeq" id="NP_439623.1">
    <property type="nucleotide sequence ID" value="NC_000907.1"/>
</dbReference>
<dbReference type="PDB" id="3PSA">
    <property type="method" value="X-ray"/>
    <property type="resolution" value="1.70 A"/>
    <property type="chains" value="A=22-347"/>
</dbReference>
<dbReference type="PDB" id="3PSH">
    <property type="method" value="X-ray"/>
    <property type="resolution" value="1.50 A"/>
    <property type="chains" value="A=22-347"/>
</dbReference>
<dbReference type="PDBsum" id="3PSA"/>
<dbReference type="PDBsum" id="3PSH"/>
<dbReference type="SMR" id="P44206"/>
<dbReference type="DIP" id="DIP-58992N"/>
<dbReference type="IntAct" id="P44206">
    <property type="interactions" value="2"/>
</dbReference>
<dbReference type="STRING" id="71421.HI_1472"/>
<dbReference type="EnsemblBacteria" id="AAC23120">
    <property type="protein sequence ID" value="AAC23120"/>
    <property type="gene ID" value="HI_1472"/>
</dbReference>
<dbReference type="KEGG" id="hin:HI_1472"/>
<dbReference type="PATRIC" id="fig|71421.8.peg.1539"/>
<dbReference type="eggNOG" id="COG0614">
    <property type="taxonomic scope" value="Bacteria"/>
</dbReference>
<dbReference type="HOGENOM" id="CLU_038034_13_0_6"/>
<dbReference type="OrthoDB" id="9775594at2"/>
<dbReference type="PhylomeDB" id="P44206"/>
<dbReference type="BioCyc" id="HINF71421:G1GJ1-1497-MONOMER"/>
<dbReference type="EvolutionaryTrace" id="P44206"/>
<dbReference type="Proteomes" id="UP000000579">
    <property type="component" value="Chromosome"/>
</dbReference>
<dbReference type="GO" id="GO:0042597">
    <property type="term" value="C:periplasmic space"/>
    <property type="evidence" value="ECO:0007669"/>
    <property type="project" value="UniProtKB-SubCell"/>
</dbReference>
<dbReference type="GO" id="GO:0071281">
    <property type="term" value="P:cellular response to iron ion"/>
    <property type="evidence" value="ECO:0000318"/>
    <property type="project" value="GO_Central"/>
</dbReference>
<dbReference type="GO" id="GO:0006811">
    <property type="term" value="P:monoatomic ion transport"/>
    <property type="evidence" value="ECO:0007669"/>
    <property type="project" value="UniProtKB-KW"/>
</dbReference>
<dbReference type="CDD" id="cd01142">
    <property type="entry name" value="TroA_e"/>
    <property type="match status" value="1"/>
</dbReference>
<dbReference type="Gene3D" id="3.40.50.1980">
    <property type="entry name" value="Nitrogenase molybdenum iron protein domain"/>
    <property type="match status" value="2"/>
</dbReference>
<dbReference type="InterPro" id="IPR050902">
    <property type="entry name" value="ABC_Transporter_SBP"/>
</dbReference>
<dbReference type="InterPro" id="IPR002491">
    <property type="entry name" value="ABC_transptr_periplasmic_BD"/>
</dbReference>
<dbReference type="PANTHER" id="PTHR30535:SF34">
    <property type="entry name" value="MOLYBDATE-BINDING PROTEIN MOLA"/>
    <property type="match status" value="1"/>
</dbReference>
<dbReference type="PANTHER" id="PTHR30535">
    <property type="entry name" value="VITAMIN B12-BINDING PROTEIN"/>
    <property type="match status" value="1"/>
</dbReference>
<dbReference type="Pfam" id="PF01497">
    <property type="entry name" value="Peripla_BP_2"/>
    <property type="match status" value="1"/>
</dbReference>
<dbReference type="SUPFAM" id="SSF53807">
    <property type="entry name" value="Helical backbone' metal receptor"/>
    <property type="match status" value="1"/>
</dbReference>
<dbReference type="PROSITE" id="PS50983">
    <property type="entry name" value="FE_B12_PBP"/>
    <property type="match status" value="1"/>
</dbReference>
<comment type="function">
    <text evidence="4 7">Part of the ABC transporter complex MolBCA involved in molybdate import (PubMed:22078568, PubMed:24722984). Functions as a low-affinity molybdate transporter (PubMed:24722984). Binds to both molybdate and tungstate, but not to sulfate or phosphate (PubMed:22078568).</text>
</comment>
<comment type="activity regulation">
    <text evidence="5">The MolBCA complex shows a decrease in affinity in the presence of increasing concentrations of substrate and nucleotide.</text>
</comment>
<comment type="subunit">
    <text evidence="3 5 6">The complex is composed of two ATP-binding proteins (MolC), two transmembrane proteins (MolB) and a solute-binding protein (MolA).</text>
</comment>
<comment type="interaction">
    <interactant intactId="EBI-15837683">
        <id>P44206</id>
    </interactant>
    <interactant intactId="EBI-9013882">
        <id>Q57130</id>
        <label>molB</label>
    </interactant>
    <organismsDiffer>false</organismsDiffer>
    <experiments>2</experiments>
</comment>
<comment type="subcellular location">
    <subcellularLocation>
        <location evidence="9">Periplasm</location>
    </subcellularLocation>
</comment>
<comment type="domain">
    <text evidence="6">Nucleotide binding is coupled to a conformational shift at the periplasmic gate. This shift is akin to unlocking a swinging door: allowing just enough space for molybdate to slip into the cell. The lower cytoplasmic gate, identified as gate I, remains open throughout the MolBC-A mechanism, and cytoplasmic gate II closes in the presence of nucleotide.</text>
</comment>
<comment type="similarity">
    <text evidence="9">Belongs to the bacterial solute-binding protein 8 family.</text>
</comment>
<name>MOLA_HAEIN</name>
<feature type="signal peptide" evidence="1">
    <location>
        <begin position="1"/>
        <end position="21"/>
    </location>
</feature>
<feature type="chain" id="PRO_0000013972" description="Molybdate-binding protein MolA">
    <location>
        <begin position="22"/>
        <end position="351"/>
    </location>
</feature>
<feature type="domain" description="Fe/B12 periplasmic-binding" evidence="2">
    <location>
        <begin position="41"/>
        <end position="322"/>
    </location>
</feature>
<feature type="binding site" evidence="4 11">
    <location>
        <begin position="47"/>
        <end position="48"/>
    </location>
    <ligand>
        <name>molybdate</name>
        <dbReference type="ChEBI" id="CHEBI:36264"/>
    </ligand>
</feature>
<feature type="binding site" evidence="4 11">
    <location>
        <position position="217"/>
    </location>
    <ligand>
        <name>molybdate</name>
        <dbReference type="ChEBI" id="CHEBI:36264"/>
    </ligand>
</feature>
<feature type="binding site" evidence="4 11">
    <location>
        <position position="264"/>
    </location>
    <ligand>
        <name>molybdate</name>
        <dbReference type="ChEBI" id="CHEBI:36264"/>
    </ligand>
</feature>
<feature type="binding site" evidence="4 11">
    <location>
        <begin position="300"/>
        <end position="301"/>
    </location>
    <ligand>
        <name>molybdate</name>
        <dbReference type="ChEBI" id="CHEBI:36264"/>
    </ligand>
</feature>
<feature type="strand" evidence="12">
    <location>
        <begin position="23"/>
        <end position="26"/>
    </location>
</feature>
<feature type="strand" evidence="12">
    <location>
        <begin position="32"/>
        <end position="35"/>
    </location>
</feature>
<feature type="strand" evidence="12">
    <location>
        <begin position="42"/>
        <end position="45"/>
    </location>
</feature>
<feature type="helix" evidence="12">
    <location>
        <begin position="47"/>
        <end position="55"/>
    </location>
</feature>
<feature type="helix" evidence="12">
    <location>
        <begin position="59"/>
        <end position="61"/>
    </location>
</feature>
<feature type="strand" evidence="12">
    <location>
        <begin position="62"/>
        <end position="65"/>
    </location>
</feature>
<feature type="helix" evidence="12">
    <location>
        <begin position="69"/>
        <end position="73"/>
    </location>
</feature>
<feature type="helix" evidence="12">
    <location>
        <begin position="77"/>
        <end position="79"/>
    </location>
</feature>
<feature type="helix" evidence="12">
    <location>
        <begin position="82"/>
        <end position="86"/>
    </location>
</feature>
<feature type="helix" evidence="12">
    <location>
        <begin position="98"/>
        <end position="103"/>
    </location>
</feature>
<feature type="strand" evidence="12">
    <location>
        <begin position="107"/>
        <end position="112"/>
    </location>
</feature>
<feature type="helix" evidence="12">
    <location>
        <begin position="117"/>
        <end position="124"/>
    </location>
</feature>
<feature type="turn" evidence="12">
    <location>
        <begin position="125"/>
        <end position="127"/>
    </location>
</feature>
<feature type="strand" evidence="12">
    <location>
        <begin position="130"/>
        <end position="133"/>
    </location>
</feature>
<feature type="helix" evidence="12">
    <location>
        <begin position="140"/>
        <end position="142"/>
    </location>
</feature>
<feature type="helix" evidence="12">
    <location>
        <begin position="153"/>
        <end position="172"/>
    </location>
</feature>
<feature type="helix" evidence="12">
    <location>
        <begin position="175"/>
        <end position="186"/>
    </location>
</feature>
<feature type="helix" evidence="12">
    <location>
        <begin position="189"/>
        <end position="196"/>
    </location>
</feature>
<feature type="turn" evidence="12">
    <location>
        <begin position="201"/>
        <end position="203"/>
    </location>
</feature>
<feature type="strand" evidence="12">
    <location>
        <begin position="204"/>
        <end position="209"/>
    </location>
</feature>
<feature type="turn" evidence="12">
    <location>
        <begin position="212"/>
        <end position="214"/>
    </location>
</feature>
<feature type="strand" evidence="12">
    <location>
        <begin position="215"/>
        <end position="217"/>
    </location>
</feature>
<feature type="strand" evidence="12">
    <location>
        <begin position="219"/>
        <end position="221"/>
    </location>
</feature>
<feature type="helix" evidence="12">
    <location>
        <begin position="222"/>
        <end position="229"/>
    </location>
</feature>
<feature type="strand" evidence="12">
    <location>
        <begin position="232"/>
        <end position="234"/>
    </location>
</feature>
<feature type="turn" evidence="12">
    <location>
        <begin position="235"/>
        <end position="239"/>
    </location>
</feature>
<feature type="strand" evidence="12">
    <location>
        <begin position="241"/>
        <end position="245"/>
    </location>
</feature>
<feature type="helix" evidence="12">
    <location>
        <begin position="248"/>
        <end position="254"/>
    </location>
</feature>
<feature type="strand" evidence="12">
    <location>
        <begin position="257"/>
        <end position="261"/>
    </location>
</feature>
<feature type="helix" evidence="12">
    <location>
        <begin position="268"/>
        <end position="273"/>
    </location>
</feature>
<feature type="helix" evidence="12">
    <location>
        <begin position="276"/>
        <end position="278"/>
    </location>
</feature>
<feature type="helix" evidence="12">
    <location>
        <begin position="282"/>
        <end position="285"/>
    </location>
</feature>
<feature type="strand" evidence="12">
    <location>
        <begin position="289"/>
        <end position="291"/>
    </location>
</feature>
<feature type="helix" evidence="12">
    <location>
        <begin position="304"/>
        <end position="308"/>
    </location>
</feature>
<feature type="helix" evidence="12">
    <location>
        <begin position="310"/>
        <end position="318"/>
    </location>
</feature>
<feature type="helix" evidence="12">
    <location>
        <begin position="320"/>
        <end position="322"/>
    </location>
</feature>
<feature type="helix" evidence="12">
    <location>
        <begin position="328"/>
        <end position="339"/>
    </location>
</feature>
<feature type="strand" evidence="12">
    <location>
        <begin position="340"/>
        <end position="342"/>
    </location>
</feature>
<accession>P44206</accession>
<protein>
    <recommendedName>
        <fullName evidence="9">Molybdate-binding protein MolA</fullName>
    </recommendedName>
    <alternativeName>
        <fullName evidence="9">Molybdate/tungstate-binding protein MolA</fullName>
    </alternativeName>
</protein>
<gene>
    <name evidence="8" type="primary">molA</name>
    <name type="ordered locus">HI_1472</name>
</gene>
<organism>
    <name type="scientific">Haemophilus influenzae (strain ATCC 51907 / DSM 11121 / KW20 / Rd)</name>
    <dbReference type="NCBI Taxonomy" id="71421"/>
    <lineage>
        <taxon>Bacteria</taxon>
        <taxon>Pseudomonadati</taxon>
        <taxon>Pseudomonadota</taxon>
        <taxon>Gammaproteobacteria</taxon>
        <taxon>Pasteurellales</taxon>
        <taxon>Pasteurellaceae</taxon>
        <taxon>Haemophilus</taxon>
    </lineage>
</organism>
<reference key="1">
    <citation type="journal article" date="1995" name="Science">
        <title>Whole-genome random sequencing and assembly of Haemophilus influenzae Rd.</title>
        <authorList>
            <person name="Fleischmann R.D."/>
            <person name="Adams M.D."/>
            <person name="White O."/>
            <person name="Clayton R.A."/>
            <person name="Kirkness E.F."/>
            <person name="Kerlavage A.R."/>
            <person name="Bult C.J."/>
            <person name="Tomb J.-F."/>
            <person name="Dougherty B.A."/>
            <person name="Merrick J.M."/>
            <person name="McKenney K."/>
            <person name="Sutton G.G."/>
            <person name="FitzHugh W."/>
            <person name="Fields C.A."/>
            <person name="Gocayne J.D."/>
            <person name="Scott J.D."/>
            <person name="Shirley R."/>
            <person name="Liu L.-I."/>
            <person name="Glodek A."/>
            <person name="Kelley J.M."/>
            <person name="Weidman J.F."/>
            <person name="Phillips C.A."/>
            <person name="Spriggs T."/>
            <person name="Hedblom E."/>
            <person name="Cotton M.D."/>
            <person name="Utterback T.R."/>
            <person name="Hanna M.C."/>
            <person name="Nguyen D.T."/>
            <person name="Saudek D.M."/>
            <person name="Brandon R.C."/>
            <person name="Fine L.D."/>
            <person name="Fritchman J.L."/>
            <person name="Fuhrmann J.L."/>
            <person name="Geoghagen N.S.M."/>
            <person name="Gnehm C.L."/>
            <person name="McDonald L.A."/>
            <person name="Small K.V."/>
            <person name="Fraser C.M."/>
            <person name="Smith H.O."/>
            <person name="Venter J.C."/>
        </authorList>
    </citation>
    <scope>NUCLEOTIDE SEQUENCE [LARGE SCALE GENOMIC DNA]</scope>
    <source>
        <strain>ATCC 51907 / DSM 11121 / KW20 / Rd</strain>
    </source>
</reference>
<reference key="2">
    <citation type="journal article" date="2000" name="Electrophoresis">
        <title>Two-dimensional map of the proteome of Haemophilus influenzae.</title>
        <authorList>
            <person name="Langen H."/>
            <person name="Takacs B."/>
            <person name="Evers S."/>
            <person name="Berndt P."/>
            <person name="Lahm H.W."/>
            <person name="Wipf B."/>
            <person name="Gray C."/>
            <person name="Fountoulakis M."/>
        </authorList>
    </citation>
    <scope>IDENTIFICATION BY MASS SPECTROMETRY</scope>
    <source>
        <strain>ATCC 51907 / DSM 11121 / KW20 / Rd</strain>
    </source>
</reference>
<reference key="3">
    <citation type="journal article" date="2010" name="Nat. Struct. Mol. Biol.">
        <title>A distinct mechanism for the ABC transporter BtuCD-BtuF revealed by the dynamics of complex formation.</title>
        <authorList>
            <person name="Lewinson O."/>
            <person name="Lee A.T."/>
            <person name="Locher K.P."/>
            <person name="Rees D.C."/>
        </authorList>
    </citation>
    <scope>SUBUNIT</scope>
</reference>
<reference key="4">
    <citation type="journal article" date="2013" name="Proc. Natl. Acad. Sci. U.S.A.">
        <title>Two molybdate/tungstate ABC transporters that interact very differently with their substrate binding proteins.</title>
        <authorList>
            <person name="Vigonsky E."/>
            <person name="Ovcharenko E."/>
            <person name="Lewinson O."/>
        </authorList>
    </citation>
    <scope>SUBUNIT</scope>
    <scope>ACTIVITY REGULATION</scope>
</reference>
<reference key="5">
    <citation type="journal article" date="2013" name="J. Biol. Chem.">
        <title>EPR spectroscopy of MolB2C2-a reveals mechanism of transport for a bacterial type II molybdate importer.</title>
        <authorList>
            <person name="Rice A.J."/>
            <person name="Alvarez F.J."/>
            <person name="Schultz K.M."/>
            <person name="Klug C.S."/>
            <person name="Davidson A.L."/>
            <person name="Pinkett H.W."/>
        </authorList>
    </citation>
    <scope>SUBUNIT</scope>
    <scope>DOMAIN</scope>
</reference>
<reference key="6">
    <citation type="journal article" date="2014" name="J. Biol. Chem.">
        <title>Small substrate transport and mechanism of a molybdate ATP binding cassette transporter in a lipid environment.</title>
        <authorList>
            <person name="Rice A.J."/>
            <person name="Harrison A."/>
            <person name="Alvarez F.J."/>
            <person name="Davidson A.L."/>
            <person name="Pinkett H.W."/>
        </authorList>
    </citation>
    <scope>FUNCTION</scope>
</reference>
<reference evidence="10 11" key="7">
    <citation type="journal article" date="2011" name="Structure">
        <title>Classification of a Haemophilus influenzae ABC transporter HI1470/71 through its cognate molybdate periplasmic binding protein, MolA.</title>
        <authorList>
            <person name="Tirado-Lee L."/>
            <person name="Lee A."/>
            <person name="Rees D.C."/>
            <person name="Pinkett H.W."/>
        </authorList>
    </citation>
    <scope>X-RAY CRYSTALLOGRAPHY (1.50 ANGSTROMS) OF 22-347 IN COMPLEX WITH MOLYBDATE AND TUNGSTATE</scope>
    <scope>FUNCTION</scope>
</reference>
<sequence>MKLKSLLIACLLSSLSFSALADRIITDQLDRKVTIPDHINRAVVLQHQTLNIAVQLDATKQIVGVLSNWKKQLGKNYVRLAPELENMAMPGDLNSVNIESLLALKPDVVFVTNYAPSEMIKQISDVNIPVVAISLRTGEVGEKGKLNPTLTDEDKAYNDGLKQGIELIAEVFEKKQQGDELVKAAFANRKLLADRLGDVSADKRVRTYMANPDLGTYGSGKYTGLMMEHAGAYNVAAATIKGFKQVSLENVLEWNPAVILVQDRYPDVVPQILNDQGWANIQALKDKKVFLMPEYAKAWGYPMPEALALGEVWLAKALYPQRFQDVDLDKMVNDYYQKFYRTSYKPDNAAR</sequence>